<reference key="1">
    <citation type="submission" date="1999-05" db="EMBL/GenBank/DDBJ databases">
        <authorList>
            <person name="Campos-Garcia J."/>
            <person name="Soberon-Chavez G."/>
        </authorList>
    </citation>
    <scope>NUCLEOTIDE SEQUENCE [GENOMIC DNA]</scope>
    <source>
        <strain>ATCC 15692 / DSM 22644 / CIP 104116 / JCM 14847 / LMG 12228 / 1C / PRS 101 / PAO1</strain>
    </source>
</reference>
<reference key="2">
    <citation type="journal article" date="2000" name="Nature">
        <title>Complete genome sequence of Pseudomonas aeruginosa PAO1, an opportunistic pathogen.</title>
        <authorList>
            <person name="Stover C.K."/>
            <person name="Pham X.-Q.T."/>
            <person name="Erwin A.L."/>
            <person name="Mizoguchi S.D."/>
            <person name="Warrener P."/>
            <person name="Hickey M.J."/>
            <person name="Brinkman F.S.L."/>
            <person name="Hufnagle W.O."/>
            <person name="Kowalik D.J."/>
            <person name="Lagrou M."/>
            <person name="Garber R.L."/>
            <person name="Goltry L."/>
            <person name="Tolentino E."/>
            <person name="Westbrock-Wadman S."/>
            <person name="Yuan Y."/>
            <person name="Brody L.L."/>
            <person name="Coulter S.N."/>
            <person name="Folger K.R."/>
            <person name="Kas A."/>
            <person name="Larbig K."/>
            <person name="Lim R.M."/>
            <person name="Smith K.A."/>
            <person name="Spencer D.H."/>
            <person name="Wong G.K.-S."/>
            <person name="Wu Z."/>
            <person name="Paulsen I.T."/>
            <person name="Reizer J."/>
            <person name="Saier M.H. Jr."/>
            <person name="Hancock R.E.W."/>
            <person name="Lory S."/>
            <person name="Olson M.V."/>
        </authorList>
    </citation>
    <scope>NUCLEOTIDE SEQUENCE [LARGE SCALE GENOMIC DNA]</scope>
    <source>
        <strain>ATCC 15692 / DSM 22644 / CIP 104116 / JCM 14847 / LMG 12228 / 1C / PRS 101 / PAO1</strain>
    </source>
</reference>
<sequence>MTHSVSPIGYIRSCFMEKFAIPRQPLLAPAARGTLELLPPFDQVEALEGLEQVSHVWLLFLFHQALEDKPRLKVRPPRLGGNRSLGVFATRATHRPNGIGQSVVRLEGFEAGRLWLSGIDLLDGTPVLDIKPYVPYADAVADARNGIADAPPPGIAVEWSEQARRQAHEHGQRLRQPVAELIEQCLAQDPRPAYQKPEPGRRYGVRLWDLDVHWHYPRPDLIRVLDVAGGD</sequence>
<name>RCSF1_PSEAE</name>
<accession>Q9RPT0</accession>
<comment type="similarity">
    <text evidence="3">Belongs to the tRNA methyltransferase O family.</text>
</comment>
<keyword id="KW-0002">3D-structure</keyword>
<keyword id="KW-0489">Methyltransferase</keyword>
<keyword id="KW-1185">Reference proteome</keyword>
<keyword id="KW-0949">S-adenosyl-L-methionine</keyword>
<keyword id="KW-0808">Transferase</keyword>
<proteinExistence type="evidence at protein level"/>
<organism>
    <name type="scientific">Pseudomonas aeruginosa (strain ATCC 15692 / DSM 22644 / CIP 104116 / JCM 14847 / LMG 12228 / 1C / PRS 101 / PAO1)</name>
    <dbReference type="NCBI Taxonomy" id="208964"/>
    <lineage>
        <taxon>Bacteria</taxon>
        <taxon>Pseudomonadati</taxon>
        <taxon>Pseudomonadota</taxon>
        <taxon>Gammaproteobacteria</taxon>
        <taxon>Pseudomonadales</taxon>
        <taxon>Pseudomonadaceae</taxon>
        <taxon>Pseudomonas</taxon>
    </lineage>
</organism>
<feature type="chain" id="PRO_0000155614" description="Putative S-adenosylmethionine-dependent methyltransferase RcsF">
    <location>
        <begin position="1"/>
        <end position="231"/>
    </location>
</feature>
<feature type="domain" description="TsaA-like" evidence="2">
    <location>
        <begin position="5"/>
        <end position="142"/>
    </location>
</feature>
<feature type="binding site" evidence="1">
    <location>
        <begin position="22"/>
        <end position="24"/>
    </location>
    <ligand>
        <name>S-adenosyl-L-methionine</name>
        <dbReference type="ChEBI" id="CHEBI:59789"/>
    </ligand>
</feature>
<feature type="binding site" evidence="1">
    <location>
        <begin position="63"/>
        <end position="64"/>
    </location>
    <ligand>
        <name>S-adenosyl-L-methionine</name>
        <dbReference type="ChEBI" id="CHEBI:59789"/>
    </ligand>
</feature>
<feature type="binding site" evidence="1">
    <location>
        <position position="91"/>
    </location>
    <ligand>
        <name>S-adenosyl-L-methionine</name>
        <dbReference type="ChEBI" id="CHEBI:59789"/>
    </ligand>
</feature>
<feature type="binding site" evidence="1">
    <location>
        <begin position="122"/>
        <end position="125"/>
    </location>
    <ligand>
        <name>S-adenosyl-L-methionine</name>
        <dbReference type="ChEBI" id="CHEBI:59789"/>
    </ligand>
</feature>
<feature type="strand" evidence="4">
    <location>
        <begin position="3"/>
        <end position="5"/>
    </location>
</feature>
<feature type="strand" evidence="4">
    <location>
        <begin position="8"/>
        <end position="15"/>
    </location>
</feature>
<feature type="helix" evidence="4">
    <location>
        <begin position="25"/>
        <end position="27"/>
    </location>
</feature>
<feature type="strand" evidence="4">
    <location>
        <begin position="32"/>
        <end position="37"/>
    </location>
</feature>
<feature type="turn" evidence="4">
    <location>
        <begin position="39"/>
        <end position="42"/>
    </location>
</feature>
<feature type="helix" evidence="4">
    <location>
        <begin position="44"/>
        <end position="47"/>
    </location>
</feature>
<feature type="helix" evidence="4">
    <location>
        <begin position="50"/>
        <end position="52"/>
    </location>
</feature>
<feature type="strand" evidence="4">
    <location>
        <begin position="53"/>
        <end position="61"/>
    </location>
</feature>
<feature type="helix" evidence="4">
    <location>
        <begin position="87"/>
        <end position="89"/>
    </location>
</feature>
<feature type="helix" evidence="5">
    <location>
        <begin position="96"/>
        <end position="98"/>
    </location>
</feature>
<feature type="strand" evidence="4">
    <location>
        <begin position="99"/>
        <end position="110"/>
    </location>
</feature>
<feature type="strand" evidence="4">
    <location>
        <begin position="113"/>
        <end position="118"/>
    </location>
</feature>
<feature type="strand" evidence="4">
    <location>
        <begin position="126"/>
        <end position="132"/>
    </location>
</feature>
<feature type="helix" evidence="4">
    <location>
        <begin position="135"/>
        <end position="138"/>
    </location>
</feature>
<feature type="helix" evidence="4">
    <location>
        <begin position="147"/>
        <end position="149"/>
    </location>
</feature>
<feature type="strand" evidence="4">
    <location>
        <begin position="156"/>
        <end position="159"/>
    </location>
</feature>
<feature type="helix" evidence="4">
    <location>
        <begin position="161"/>
        <end position="174"/>
    </location>
</feature>
<feature type="helix" evidence="4">
    <location>
        <begin position="178"/>
        <end position="186"/>
    </location>
</feature>
<feature type="strand" evidence="4">
    <location>
        <begin position="203"/>
        <end position="207"/>
    </location>
</feature>
<feature type="strand" evidence="4">
    <location>
        <begin position="210"/>
        <end position="218"/>
    </location>
</feature>
<feature type="strand" evidence="4">
    <location>
        <begin position="221"/>
        <end position="229"/>
    </location>
</feature>
<protein>
    <recommendedName>
        <fullName>Putative S-adenosylmethionine-dependent methyltransferase RcsF</fullName>
        <ecNumber>2.1.1.-</ecNumber>
    </recommendedName>
</protein>
<dbReference type="EC" id="2.1.1.-"/>
<dbReference type="EMBL" id="AF148964">
    <property type="protein sequence ID" value="AAD53515.1"/>
    <property type="molecule type" value="Genomic_DNA"/>
</dbReference>
<dbReference type="EMBL" id="AE004091">
    <property type="protein sequence ID" value="AAG06776.1"/>
    <property type="molecule type" value="Genomic_DNA"/>
</dbReference>
<dbReference type="PIR" id="G83221">
    <property type="entry name" value="G83221"/>
</dbReference>
<dbReference type="RefSeq" id="NP_252078.1">
    <property type="nucleotide sequence ID" value="NC_002516.2"/>
</dbReference>
<dbReference type="PDB" id="7BTU">
    <property type="method" value="X-ray"/>
    <property type="resolution" value="1.91 A"/>
    <property type="chains" value="A/B=1-231"/>
</dbReference>
<dbReference type="PDB" id="7BTZ">
    <property type="method" value="X-ray"/>
    <property type="resolution" value="2.40 A"/>
    <property type="chains" value="A/B=1-231"/>
</dbReference>
<dbReference type="PDB" id="7BU1">
    <property type="method" value="X-ray"/>
    <property type="resolution" value="2.49 A"/>
    <property type="chains" value="A/B=1-231"/>
</dbReference>
<dbReference type="PDBsum" id="7BTU"/>
<dbReference type="PDBsum" id="7BTZ"/>
<dbReference type="PDBsum" id="7BU1"/>
<dbReference type="SMR" id="Q9RPT0"/>
<dbReference type="FunCoup" id="Q9RPT0">
    <property type="interactions" value="105"/>
</dbReference>
<dbReference type="STRING" id="208964.PA3388"/>
<dbReference type="PaxDb" id="208964-PA3388"/>
<dbReference type="DNASU" id="880034"/>
<dbReference type="GeneID" id="880034"/>
<dbReference type="KEGG" id="pae:PA3388"/>
<dbReference type="PATRIC" id="fig|208964.12.peg.3547"/>
<dbReference type="PseudoCAP" id="PA3388"/>
<dbReference type="HOGENOM" id="CLU_013458_3_0_6"/>
<dbReference type="InParanoid" id="Q9RPT0"/>
<dbReference type="OrthoDB" id="9804309at2"/>
<dbReference type="PhylomeDB" id="Q9RPT0"/>
<dbReference type="BioCyc" id="PAER208964:G1FZ6-3454-MONOMER"/>
<dbReference type="Proteomes" id="UP000002438">
    <property type="component" value="Chromosome"/>
</dbReference>
<dbReference type="GO" id="GO:0089715">
    <property type="term" value="F:tRNA (L-threonylcarbamoyladenosine(37)-C2) methyltransferase activity"/>
    <property type="evidence" value="ECO:0000318"/>
    <property type="project" value="GO_Central"/>
</dbReference>
<dbReference type="GO" id="GO:0032259">
    <property type="term" value="P:methylation"/>
    <property type="evidence" value="ECO:0007669"/>
    <property type="project" value="UniProtKB-KW"/>
</dbReference>
<dbReference type="CDD" id="cd09281">
    <property type="entry name" value="UPF0066"/>
    <property type="match status" value="1"/>
</dbReference>
<dbReference type="FunFam" id="2.40.30.70:FF:000008">
    <property type="entry name" value="tRNA (N6-threonylcarbamoyladenosine(37)-N6)-methyltransferase TrmO"/>
    <property type="match status" value="1"/>
</dbReference>
<dbReference type="Gene3D" id="2.40.30.70">
    <property type="entry name" value="YaeB-like"/>
    <property type="match status" value="1"/>
</dbReference>
<dbReference type="Gene3D" id="3.30.2310.10">
    <property type="entry name" value="YaeB-like"/>
    <property type="match status" value="1"/>
</dbReference>
<dbReference type="InterPro" id="IPR023370">
    <property type="entry name" value="TrmO-like_N"/>
</dbReference>
<dbReference type="InterPro" id="IPR041369">
    <property type="entry name" value="TrmO_C"/>
</dbReference>
<dbReference type="InterPro" id="IPR023368">
    <property type="entry name" value="UPF0066_cons_site"/>
</dbReference>
<dbReference type="InterPro" id="IPR040372">
    <property type="entry name" value="YaeB-like"/>
</dbReference>
<dbReference type="InterPro" id="IPR036413">
    <property type="entry name" value="YaeB-like_sf"/>
</dbReference>
<dbReference type="InterPro" id="IPR036414">
    <property type="entry name" value="YaeB_N_sf"/>
</dbReference>
<dbReference type="NCBIfam" id="TIGR00104">
    <property type="entry name" value="tRNA_TsaA"/>
    <property type="match status" value="1"/>
</dbReference>
<dbReference type="PANTHER" id="PTHR12818">
    <property type="entry name" value="TRNA (ADENINE(37)-N6)-METHYLTRANSFERASE"/>
    <property type="match status" value="1"/>
</dbReference>
<dbReference type="PANTHER" id="PTHR12818:SF0">
    <property type="entry name" value="TRNA (ADENINE(37)-N6)-METHYLTRANSFERASE"/>
    <property type="match status" value="1"/>
</dbReference>
<dbReference type="Pfam" id="PF18389">
    <property type="entry name" value="TrmO_C"/>
    <property type="match status" value="1"/>
</dbReference>
<dbReference type="Pfam" id="PF01980">
    <property type="entry name" value="TrmO_N"/>
    <property type="match status" value="1"/>
</dbReference>
<dbReference type="SUPFAM" id="SSF118196">
    <property type="entry name" value="YaeB-like"/>
    <property type="match status" value="1"/>
</dbReference>
<dbReference type="PROSITE" id="PS01318">
    <property type="entry name" value="TSAA_1"/>
    <property type="match status" value="1"/>
</dbReference>
<dbReference type="PROSITE" id="PS51668">
    <property type="entry name" value="TSAA_2"/>
    <property type="match status" value="1"/>
</dbReference>
<evidence type="ECO:0000250" key="1"/>
<evidence type="ECO:0000255" key="2">
    <source>
        <dbReference type="PROSITE-ProRule" id="PRU01003"/>
    </source>
</evidence>
<evidence type="ECO:0000305" key="3"/>
<evidence type="ECO:0007829" key="4">
    <source>
        <dbReference type="PDB" id="7BTU"/>
    </source>
</evidence>
<evidence type="ECO:0007829" key="5">
    <source>
        <dbReference type="PDB" id="7BTZ"/>
    </source>
</evidence>
<gene>
    <name type="primary">rcsF</name>
    <name type="ordered locus">PA3388</name>
</gene>